<reference key="1">
    <citation type="journal article" date="2002" name="Proc. Natl. Acad. Sci. U.S.A.">
        <title>Genome sequence of a serotype M3 strain of group A Streptococcus: phage-encoded toxins, the high-virulence phenotype, and clone emergence.</title>
        <authorList>
            <person name="Beres S.B."/>
            <person name="Sylva G.L."/>
            <person name="Barbian K.D."/>
            <person name="Lei B."/>
            <person name="Hoff J.S."/>
            <person name="Mammarella N.D."/>
            <person name="Liu M.-Y."/>
            <person name="Smoot J.C."/>
            <person name="Porcella S.F."/>
            <person name="Parkins L.D."/>
            <person name="Campbell D.S."/>
            <person name="Smith T.M."/>
            <person name="McCormick J.K."/>
            <person name="Leung D.Y.M."/>
            <person name="Schlievert P.M."/>
            <person name="Musser J.M."/>
        </authorList>
    </citation>
    <scope>NUCLEOTIDE SEQUENCE [LARGE SCALE GENOMIC DNA]</scope>
    <source>
        <strain>ATCC BAA-595 / MGAS315</strain>
    </source>
</reference>
<comment type="function">
    <text evidence="1">Cell division protein that is part of the divisome complex and is recruited early to the Z-ring. Probably stimulates Z-ring formation, perhaps through the cross-linking of FtsZ protofilaments. Its function overlaps with FtsA.</text>
</comment>
<comment type="subunit">
    <text evidence="1">Homodimer. Interacts with FtsZ.</text>
</comment>
<comment type="subcellular location">
    <subcellularLocation>
        <location evidence="1">Cytoplasm</location>
    </subcellularLocation>
    <text evidence="1">Localizes to the division site, in a FtsZ-dependent manner.</text>
</comment>
<comment type="similarity">
    <text evidence="1">Belongs to the SepF family.</text>
</comment>
<keyword id="KW-0131">Cell cycle</keyword>
<keyword id="KW-0132">Cell division</keyword>
<keyword id="KW-0963">Cytoplasm</keyword>
<keyword id="KW-0717">Septation</keyword>
<name>SEPF_STRP3</name>
<organism>
    <name type="scientific">Streptococcus pyogenes serotype M3 (strain ATCC BAA-595 / MGAS315)</name>
    <dbReference type="NCBI Taxonomy" id="198466"/>
    <lineage>
        <taxon>Bacteria</taxon>
        <taxon>Bacillati</taxon>
        <taxon>Bacillota</taxon>
        <taxon>Bacilli</taxon>
        <taxon>Lactobacillales</taxon>
        <taxon>Streptococcaceae</taxon>
        <taxon>Streptococcus</taxon>
    </lineage>
</organism>
<feature type="chain" id="PRO_0000334105" description="Cell division protein SepF">
    <location>
        <begin position="1"/>
        <end position="218"/>
    </location>
</feature>
<feature type="region of interest" description="Disordered" evidence="2">
    <location>
        <begin position="25"/>
        <end position="115"/>
    </location>
</feature>
<feature type="compositionally biased region" description="Polar residues" evidence="2">
    <location>
        <begin position="29"/>
        <end position="43"/>
    </location>
</feature>
<feature type="compositionally biased region" description="Basic and acidic residues" evidence="2">
    <location>
        <begin position="47"/>
        <end position="63"/>
    </location>
</feature>
<sequence>MAFKDTFNKMISYFDTDEVNEVEEDVAASTDNVIPRSQQSVRASSHPKQEPRNNHVQQDHQARSQEQTRSQMHPKHGTSERYYQQSQPKEGHEMVDRRKRMSTSGIANRREQYQQSTCSDQTTIALKYPRKYEDAQEIVDLLIVNECVLIDFQFMLDAQARRCLDFIDGASKVLYGSLQKVGSSMYLLAPSNVSVNIEEMTIPHTTQDIGFDFDMKRR</sequence>
<gene>
    <name evidence="1" type="primary">sepF</name>
    <name type="ordered locus">SpyM3_1170</name>
</gene>
<accession>P0DF68</accession>
<accession>Q7CEY2</accession>
<accession>Q879A0</accession>
<protein>
    <recommendedName>
        <fullName evidence="1">Cell division protein SepF</fullName>
    </recommendedName>
</protein>
<proteinExistence type="inferred from homology"/>
<dbReference type="EMBL" id="AE014074">
    <property type="protein sequence ID" value="AAM79777.1"/>
    <property type="molecule type" value="Genomic_DNA"/>
</dbReference>
<dbReference type="RefSeq" id="WP_011018004.1">
    <property type="nucleotide sequence ID" value="NC_004070.1"/>
</dbReference>
<dbReference type="SMR" id="P0DF68"/>
<dbReference type="KEGG" id="spg:SpyM3_1170"/>
<dbReference type="HOGENOM" id="CLU_078499_2_0_9"/>
<dbReference type="Proteomes" id="UP000000564">
    <property type="component" value="Chromosome"/>
</dbReference>
<dbReference type="GO" id="GO:0005737">
    <property type="term" value="C:cytoplasm"/>
    <property type="evidence" value="ECO:0007669"/>
    <property type="project" value="UniProtKB-SubCell"/>
</dbReference>
<dbReference type="GO" id="GO:0000917">
    <property type="term" value="P:division septum assembly"/>
    <property type="evidence" value="ECO:0007669"/>
    <property type="project" value="UniProtKB-KW"/>
</dbReference>
<dbReference type="GO" id="GO:0043093">
    <property type="term" value="P:FtsZ-dependent cytokinesis"/>
    <property type="evidence" value="ECO:0007669"/>
    <property type="project" value="UniProtKB-UniRule"/>
</dbReference>
<dbReference type="Gene3D" id="3.30.110.150">
    <property type="entry name" value="SepF-like protein"/>
    <property type="match status" value="1"/>
</dbReference>
<dbReference type="HAMAP" id="MF_01197">
    <property type="entry name" value="SepF"/>
    <property type="match status" value="1"/>
</dbReference>
<dbReference type="InterPro" id="IPR023052">
    <property type="entry name" value="Cell_div_SepF"/>
</dbReference>
<dbReference type="InterPro" id="IPR007561">
    <property type="entry name" value="Cell_div_SepF/SepF-rel"/>
</dbReference>
<dbReference type="InterPro" id="IPR038594">
    <property type="entry name" value="SepF-like_sf"/>
</dbReference>
<dbReference type="PANTHER" id="PTHR35798">
    <property type="entry name" value="CELL DIVISION PROTEIN SEPF"/>
    <property type="match status" value="1"/>
</dbReference>
<dbReference type="PANTHER" id="PTHR35798:SF1">
    <property type="entry name" value="CELL DIVISION PROTEIN SEPF"/>
    <property type="match status" value="1"/>
</dbReference>
<dbReference type="Pfam" id="PF04472">
    <property type="entry name" value="SepF"/>
    <property type="match status" value="1"/>
</dbReference>
<evidence type="ECO:0000255" key="1">
    <source>
        <dbReference type="HAMAP-Rule" id="MF_01197"/>
    </source>
</evidence>
<evidence type="ECO:0000256" key="2">
    <source>
        <dbReference type="SAM" id="MobiDB-lite"/>
    </source>
</evidence>